<reference key="1">
    <citation type="journal article" date="2015" name="Genome Biol. Evol.">
        <title>Molecular diversity and gene evolution of the venom arsenal of Terebridae predatory marine snails.</title>
        <authorList>
            <person name="Gorson J."/>
            <person name="Ramrattan G."/>
            <person name="Verdes A."/>
            <person name="Wright E.M."/>
            <person name="Kantor Y."/>
            <person name="Rajaram Srinivasan R."/>
            <person name="Musunuri R."/>
            <person name="Packer D."/>
            <person name="Albano G."/>
            <person name="Qiu W.G."/>
            <person name="Holford M."/>
        </authorList>
    </citation>
    <scope>NUCLEOTIDE SEQUENCE [MRNA]</scope>
    <source>
        <tissue>Venom duct</tissue>
    </source>
</reference>
<feature type="signal peptide" evidence="1">
    <location>
        <begin position="1"/>
        <end position="21"/>
    </location>
</feature>
<feature type="propeptide" id="PRO_0000435078" evidence="2">
    <location>
        <begin position="22"/>
        <end position="45"/>
    </location>
</feature>
<feature type="chain" id="PRO_0000435079" description="Teretoxin Tsu6.8">
    <location>
        <begin position="46"/>
        <end position="81"/>
    </location>
</feature>
<dbReference type="GO" id="GO:0005576">
    <property type="term" value="C:extracellular region"/>
    <property type="evidence" value="ECO:0007669"/>
    <property type="project" value="UniProtKB-SubCell"/>
</dbReference>
<dbReference type="GO" id="GO:0090729">
    <property type="term" value="F:toxin activity"/>
    <property type="evidence" value="ECO:0007669"/>
    <property type="project" value="UniProtKB-KW"/>
</dbReference>
<protein>
    <recommendedName>
        <fullName>Teretoxin Tsu6.8</fullName>
    </recommendedName>
</protein>
<organism>
    <name type="scientific">Terebra subulata</name>
    <name type="common">Chocolate spotted auger</name>
    <name type="synonym">Buccinum subulatum</name>
    <dbReference type="NCBI Taxonomy" id="89435"/>
    <lineage>
        <taxon>Eukaryota</taxon>
        <taxon>Metazoa</taxon>
        <taxon>Spiralia</taxon>
        <taxon>Lophotrochozoa</taxon>
        <taxon>Mollusca</taxon>
        <taxon>Gastropoda</taxon>
        <taxon>Caenogastropoda</taxon>
        <taxon>Neogastropoda</taxon>
        <taxon>Conoidea</taxon>
        <taxon>Terebridae</taxon>
        <taxon>Terebra</taxon>
    </lineage>
</organism>
<sequence>MATSGRLLCLCLVLGLIFESLGHPVMGEKRAGENASPSARSLPKRLGNVEAPCGNQTCQFGCCEDDVCRELNCEHVDFPNY</sequence>
<comment type="subcellular location">
    <subcellularLocation>
        <location evidence="3">Secreted</location>
    </subcellularLocation>
</comment>
<comment type="tissue specificity">
    <text evidence="3">Expressed by the venom duct.</text>
</comment>
<comment type="domain">
    <text>The cysteine framework is VI/VII (C-C-CC-C-C).</text>
</comment>
<comment type="PTM">
    <text evidence="2">Contains 3 disulfide bonds.</text>
</comment>
<comment type="similarity">
    <text>Belongs to the teretoxin M (TM) superfamily.</text>
</comment>
<name>T68_TERSU</name>
<keyword id="KW-0165">Cleavage on pair of basic residues</keyword>
<keyword id="KW-1015">Disulfide bond</keyword>
<keyword id="KW-0964">Secreted</keyword>
<keyword id="KW-0732">Signal</keyword>
<keyword id="KW-0800">Toxin</keyword>
<accession>P0DN56</accession>
<proteinExistence type="inferred from homology"/>
<evidence type="ECO:0000255" key="1"/>
<evidence type="ECO:0000305" key="2"/>
<evidence type="ECO:0000305" key="3">
    <source>
    </source>
</evidence>